<sequence>MSELLSVALFLASVLVYAWKAGRNTWWFAATLTVLGLFVILNITRYASDYFTGDGINDAVLYTLTNSLTGAGVGKYILPGIGIVLALVGVFGALGWILRRRRHHPHHVGYSLLALLLALGSVDASPAFRQITELVKSQTRDGDPDFAVYYKEPAKTIPNPKLNLVYIYGESLERTYFDNDAFPNLTPELGALKNEGLDFSHTMQLPGTDYTIAGMVASQCGIPLFAPFEGNASASVSSFFPQNICLGDILKNAGYQNYFVQGANLRFAGKDVFLKSHGFDHLYGAEELKTVVTDPSYRNDWGFYDDTVLDEAWKKFEALSRSGQRFSLFTLTVDTHHPDGFISRTCNRKRYDYDSKPNQSFSAVSCSQENIARFINKIKASPWFKDTVIVVSSDHLAMNNTAWKYLNKQDRNNLFFILRGDKPQQETLAVKRNTMDNGATVLDILGGDNFIGLGRSSLSGQSLSEVFLNVKEKVLAMKPDIVRLWNFPKEMKAFTIDQDKNMIAFSGSHFRLPLLLRVSDKRVEPLPESEYSAPLRFQLADFAPRDNFVWVDRCYKMAQLWAPELALSTDWCVSQGQLGGQQTVQHVDKTQWKGKTAFKDTVIDMQRYKGNVDTLKIVDNDIRYKADSFIFNVAGAPEEVKQFSGISRPETWGRWSNAQLGDEVKIEYKAPLPKKFDLVITAKAFGDNANRPIPVRVGNEEQTLVLGHDVSTTTLHFNNPTDASTLVIAPPVPVSTNEGNILGHSPRKLGIGMVEIKVVNAES</sequence>
<gene>
    <name evidence="1" type="primary">mdoB</name>
    <name evidence="1" type="synonym">opgB</name>
    <name type="ordered locus">SARI_03038</name>
</gene>
<accession>A9MRX7</accession>
<reference key="1">
    <citation type="submission" date="2007-11" db="EMBL/GenBank/DDBJ databases">
        <authorList>
            <consortium name="The Salmonella enterica serovar Arizonae Genome Sequencing Project"/>
            <person name="McClelland M."/>
            <person name="Sanderson E.K."/>
            <person name="Porwollik S."/>
            <person name="Spieth J."/>
            <person name="Clifton W.S."/>
            <person name="Fulton R."/>
            <person name="Chunyan W."/>
            <person name="Wollam A."/>
            <person name="Shah N."/>
            <person name="Pepin K."/>
            <person name="Bhonagiri V."/>
            <person name="Nash W."/>
            <person name="Johnson M."/>
            <person name="Thiruvilangam P."/>
            <person name="Wilson R."/>
        </authorList>
    </citation>
    <scope>NUCLEOTIDE SEQUENCE [LARGE SCALE GENOMIC DNA]</scope>
    <source>
        <strain>ATCC BAA-731 / CDC346-86 / RSK2980</strain>
    </source>
</reference>
<dbReference type="EC" id="2.7.8.20" evidence="1"/>
<dbReference type="EMBL" id="CP000880">
    <property type="protein sequence ID" value="ABX22879.1"/>
    <property type="molecule type" value="Genomic_DNA"/>
</dbReference>
<dbReference type="SMR" id="A9MRX7"/>
<dbReference type="STRING" id="41514.SARI_03038"/>
<dbReference type="KEGG" id="ses:SARI_03038"/>
<dbReference type="HOGENOM" id="CLU_023986_1_0_6"/>
<dbReference type="UniPathway" id="UPA00637"/>
<dbReference type="Proteomes" id="UP000002084">
    <property type="component" value="Chromosome"/>
</dbReference>
<dbReference type="GO" id="GO:0005886">
    <property type="term" value="C:plasma membrane"/>
    <property type="evidence" value="ECO:0007669"/>
    <property type="project" value="UniProtKB-SubCell"/>
</dbReference>
<dbReference type="GO" id="GO:0008960">
    <property type="term" value="F:phosphatidylglycerol-membrane-oligosaccharide glycerophosphotransferase activity"/>
    <property type="evidence" value="ECO:0007669"/>
    <property type="project" value="UniProtKB-UniRule"/>
</dbReference>
<dbReference type="GO" id="GO:0009250">
    <property type="term" value="P:glucan biosynthetic process"/>
    <property type="evidence" value="ECO:0007669"/>
    <property type="project" value="UniProtKB-UniRule"/>
</dbReference>
<dbReference type="CDD" id="cd16015">
    <property type="entry name" value="LTA_synthase"/>
    <property type="match status" value="1"/>
</dbReference>
<dbReference type="FunFam" id="3.40.720.10:FF:000009">
    <property type="entry name" value="Phosphoglycerol transferase I"/>
    <property type="match status" value="1"/>
</dbReference>
<dbReference type="Gene3D" id="3.40.720.10">
    <property type="entry name" value="Alkaline Phosphatase, subunit A"/>
    <property type="match status" value="1"/>
</dbReference>
<dbReference type="HAMAP" id="MF_01070">
    <property type="entry name" value="MdoB_OpgB"/>
    <property type="match status" value="1"/>
</dbReference>
<dbReference type="InterPro" id="IPR017850">
    <property type="entry name" value="Alkaline_phosphatase_core_sf"/>
</dbReference>
<dbReference type="InterPro" id="IPR054288">
    <property type="entry name" value="DUF7024"/>
</dbReference>
<dbReference type="InterPro" id="IPR020881">
    <property type="entry name" value="OpgB"/>
</dbReference>
<dbReference type="InterPro" id="IPR050448">
    <property type="entry name" value="OpgB/LTA_synthase_biosynth"/>
</dbReference>
<dbReference type="InterPro" id="IPR000917">
    <property type="entry name" value="Sulfatase_N"/>
</dbReference>
<dbReference type="NCBIfam" id="NF003000">
    <property type="entry name" value="PRK03776.1"/>
    <property type="match status" value="1"/>
</dbReference>
<dbReference type="PANTHER" id="PTHR47371">
    <property type="entry name" value="LIPOTEICHOIC ACID SYNTHASE"/>
    <property type="match status" value="1"/>
</dbReference>
<dbReference type="PANTHER" id="PTHR47371:SF3">
    <property type="entry name" value="PHOSPHOGLYCEROL TRANSFERASE I"/>
    <property type="match status" value="1"/>
</dbReference>
<dbReference type="Pfam" id="PF22895">
    <property type="entry name" value="DUF7024"/>
    <property type="match status" value="1"/>
</dbReference>
<dbReference type="Pfam" id="PF00884">
    <property type="entry name" value="Sulfatase"/>
    <property type="match status" value="1"/>
</dbReference>
<dbReference type="SUPFAM" id="SSF53649">
    <property type="entry name" value="Alkaline phosphatase-like"/>
    <property type="match status" value="1"/>
</dbReference>
<proteinExistence type="inferred from homology"/>
<feature type="chain" id="PRO_1000084494" description="Phosphoglycerol transferase I">
    <location>
        <begin position="1"/>
        <end position="763"/>
    </location>
</feature>
<feature type="transmembrane region" description="Helical" evidence="1">
    <location>
        <begin position="1"/>
        <end position="21"/>
    </location>
</feature>
<feature type="transmembrane region" description="Helical" evidence="1">
    <location>
        <begin position="24"/>
        <end position="44"/>
    </location>
</feature>
<feature type="transmembrane region" description="Helical" evidence="1">
    <location>
        <begin position="77"/>
        <end position="97"/>
    </location>
</feature>
<feature type="transmembrane region" description="Helical" evidence="1">
    <location>
        <begin position="108"/>
        <end position="128"/>
    </location>
</feature>
<keyword id="KW-0997">Cell inner membrane</keyword>
<keyword id="KW-1003">Cell membrane</keyword>
<keyword id="KW-0472">Membrane</keyword>
<keyword id="KW-1185">Reference proteome</keyword>
<keyword id="KW-0808">Transferase</keyword>
<keyword id="KW-0812">Transmembrane</keyword>
<keyword id="KW-1133">Transmembrane helix</keyword>
<protein>
    <recommendedName>
        <fullName evidence="1">Phosphoglycerol transferase I</fullName>
        <ecNumber evidence="1">2.7.8.20</ecNumber>
    </recommendedName>
    <alternativeName>
        <fullName evidence="1">Phosphatidylglycerol--membrane-oligosaccharide glycerophosphotransferase</fullName>
    </alternativeName>
</protein>
<name>OPGB_SALAR</name>
<evidence type="ECO:0000255" key="1">
    <source>
        <dbReference type="HAMAP-Rule" id="MF_01070"/>
    </source>
</evidence>
<comment type="function">
    <text evidence="1">Transfers a phosphoglycerol residue from phosphatidylglycerol to the membrane-bound nascent glucan backbones.</text>
</comment>
<comment type="catalytic activity">
    <reaction evidence="1">
        <text>a phosphatidylglycerol + a membrane-derived-oligosaccharide D-glucose = a 1,2-diacyl-sn-glycerol + a membrane-derived-oligosaccharide 6-(glycerophospho)-D-glucose.</text>
        <dbReference type="EC" id="2.7.8.20"/>
    </reaction>
</comment>
<comment type="pathway">
    <text evidence="1">Glycan metabolism; osmoregulated periplasmic glucan (OPG) biosynthesis.</text>
</comment>
<comment type="subcellular location">
    <subcellularLocation>
        <location evidence="1">Cell inner membrane</location>
        <topology evidence="1">Multi-pass membrane protein</topology>
    </subcellularLocation>
</comment>
<comment type="similarity">
    <text evidence="1">Belongs to the OpgB family.</text>
</comment>
<organism>
    <name type="scientific">Salmonella arizonae (strain ATCC BAA-731 / CDC346-86 / RSK2980)</name>
    <dbReference type="NCBI Taxonomy" id="41514"/>
    <lineage>
        <taxon>Bacteria</taxon>
        <taxon>Pseudomonadati</taxon>
        <taxon>Pseudomonadota</taxon>
        <taxon>Gammaproteobacteria</taxon>
        <taxon>Enterobacterales</taxon>
        <taxon>Enterobacteriaceae</taxon>
        <taxon>Salmonella</taxon>
    </lineage>
</organism>